<name>COX2_CORGL</name>
<dbReference type="EC" id="7.1.1.9"/>
<dbReference type="EMBL" id="AB052749">
    <property type="protein sequence ID" value="BAB64407.1"/>
    <property type="molecule type" value="Genomic_DNA"/>
</dbReference>
<dbReference type="EMBL" id="BA000036">
    <property type="protein sequence ID" value="BAB99588.1"/>
    <property type="molecule type" value="Genomic_DNA"/>
</dbReference>
<dbReference type="EMBL" id="BX927154">
    <property type="protein sequence ID" value="CAF20536.1"/>
    <property type="molecule type" value="Genomic_DNA"/>
</dbReference>
<dbReference type="RefSeq" id="NP_601399.1">
    <property type="nucleotide sequence ID" value="NC_003450.3"/>
</dbReference>
<dbReference type="RefSeq" id="WP_011014951.1">
    <property type="nucleotide sequence ID" value="NC_006958.1"/>
</dbReference>
<dbReference type="PDB" id="7Q21">
    <property type="method" value="EM"/>
    <property type="resolution" value="3.00 A"/>
    <property type="chains" value="G/g=1-359"/>
</dbReference>
<dbReference type="PDB" id="7QHM">
    <property type="method" value="EM"/>
    <property type="resolution" value="2.80 A"/>
    <property type="chains" value="E/R=29-359"/>
</dbReference>
<dbReference type="PDB" id="7QHO">
    <property type="method" value="EM"/>
    <property type="resolution" value="3.10 A"/>
    <property type="chains" value="E/R=29-359"/>
</dbReference>
<dbReference type="PDBsum" id="7Q21"/>
<dbReference type="PDBsum" id="7QHM"/>
<dbReference type="PDBsum" id="7QHO"/>
<dbReference type="EMDB" id="EMD-13777"/>
<dbReference type="EMDB" id="EMD-13976"/>
<dbReference type="EMDB" id="EMD-13977"/>
<dbReference type="SMR" id="Q8NNK2"/>
<dbReference type="STRING" id="196627.cg2409"/>
<dbReference type="TCDB" id="3.D.4.4.2">
    <property type="family name" value="the proton-translocating cytochrome oxidase (cox) superfamily"/>
</dbReference>
<dbReference type="KEGG" id="cgb:cg2409"/>
<dbReference type="KEGG" id="cgl:Cgl2195"/>
<dbReference type="PATRIC" id="fig|196627.13.peg.2131"/>
<dbReference type="eggNOG" id="COG1622">
    <property type="taxonomic scope" value="Bacteria"/>
</dbReference>
<dbReference type="HOGENOM" id="CLU_036876_3_1_11"/>
<dbReference type="OrthoDB" id="9781261at2"/>
<dbReference type="BioCyc" id="CORYNE:G18NG-11787-MONOMER"/>
<dbReference type="Proteomes" id="UP000000582">
    <property type="component" value="Chromosome"/>
</dbReference>
<dbReference type="Proteomes" id="UP000001009">
    <property type="component" value="Chromosome"/>
</dbReference>
<dbReference type="GO" id="GO:0005886">
    <property type="term" value="C:plasma membrane"/>
    <property type="evidence" value="ECO:0007669"/>
    <property type="project" value="UniProtKB-SubCell"/>
</dbReference>
<dbReference type="GO" id="GO:0005507">
    <property type="term" value="F:copper ion binding"/>
    <property type="evidence" value="ECO:0007669"/>
    <property type="project" value="InterPro"/>
</dbReference>
<dbReference type="GO" id="GO:0004129">
    <property type="term" value="F:cytochrome-c oxidase activity"/>
    <property type="evidence" value="ECO:0007669"/>
    <property type="project" value="UniProtKB-EC"/>
</dbReference>
<dbReference type="GO" id="GO:0042773">
    <property type="term" value="P:ATP synthesis coupled electron transport"/>
    <property type="evidence" value="ECO:0007669"/>
    <property type="project" value="TreeGrafter"/>
</dbReference>
<dbReference type="Gene3D" id="1.10.287.90">
    <property type="match status" value="1"/>
</dbReference>
<dbReference type="Gene3D" id="2.60.40.420">
    <property type="entry name" value="Cupredoxins - blue copper proteins"/>
    <property type="match status" value="1"/>
</dbReference>
<dbReference type="InterPro" id="IPR045187">
    <property type="entry name" value="CcO_II"/>
</dbReference>
<dbReference type="InterPro" id="IPR002429">
    <property type="entry name" value="CcO_II-like_C"/>
</dbReference>
<dbReference type="InterPro" id="IPR001505">
    <property type="entry name" value="Copper_CuA"/>
</dbReference>
<dbReference type="InterPro" id="IPR008972">
    <property type="entry name" value="Cupredoxin"/>
</dbReference>
<dbReference type="InterPro" id="IPR011759">
    <property type="entry name" value="Cyt_c_oxidase_su2_TM_dom"/>
</dbReference>
<dbReference type="InterPro" id="IPR036257">
    <property type="entry name" value="Cyt_c_oxidase_su2_TM_sf"/>
</dbReference>
<dbReference type="PANTHER" id="PTHR22888:SF9">
    <property type="entry name" value="CYTOCHROME C OXIDASE SUBUNIT 2"/>
    <property type="match status" value="1"/>
</dbReference>
<dbReference type="PANTHER" id="PTHR22888">
    <property type="entry name" value="CYTOCHROME C OXIDASE, SUBUNIT II"/>
    <property type="match status" value="1"/>
</dbReference>
<dbReference type="Pfam" id="PF00116">
    <property type="entry name" value="COX2"/>
    <property type="match status" value="1"/>
</dbReference>
<dbReference type="PRINTS" id="PR01166">
    <property type="entry name" value="CYCOXIDASEII"/>
</dbReference>
<dbReference type="SUPFAM" id="SSF49503">
    <property type="entry name" value="Cupredoxins"/>
    <property type="match status" value="1"/>
</dbReference>
<dbReference type="SUPFAM" id="SSF81464">
    <property type="entry name" value="Cytochrome c oxidase subunit II-like, transmembrane region"/>
    <property type="match status" value="1"/>
</dbReference>
<dbReference type="PROSITE" id="PS00078">
    <property type="entry name" value="COX2"/>
    <property type="match status" value="1"/>
</dbReference>
<dbReference type="PROSITE" id="PS50857">
    <property type="entry name" value="COX2_CUA"/>
    <property type="match status" value="1"/>
</dbReference>
<dbReference type="PROSITE" id="PS50999">
    <property type="entry name" value="COX2_TM"/>
    <property type="match status" value="1"/>
</dbReference>
<gene>
    <name type="primary">ctaC</name>
    <name type="ordered locus">Cgl2195</name>
    <name type="ordered locus">cg2409</name>
</gene>
<comment type="function">
    <text evidence="1">Subunits I and II form the functional core of the enzyme complex. Electrons originating in cytochrome c are transferred via heme a and Cu(A) to the binuclear center formed by heme a3 and Cu(B) (By similarity).</text>
</comment>
<comment type="catalytic activity">
    <reaction>
        <text>4 Fe(II)-[cytochrome c] + O2 + 8 H(+)(in) = 4 Fe(III)-[cytochrome c] + 2 H2O + 4 H(+)(out)</text>
        <dbReference type="Rhea" id="RHEA:11436"/>
        <dbReference type="Rhea" id="RHEA-COMP:10350"/>
        <dbReference type="Rhea" id="RHEA-COMP:14399"/>
        <dbReference type="ChEBI" id="CHEBI:15377"/>
        <dbReference type="ChEBI" id="CHEBI:15378"/>
        <dbReference type="ChEBI" id="CHEBI:15379"/>
        <dbReference type="ChEBI" id="CHEBI:29033"/>
        <dbReference type="ChEBI" id="CHEBI:29034"/>
        <dbReference type="EC" id="7.1.1.9"/>
    </reaction>
</comment>
<comment type="cofactor">
    <cofactor evidence="1">
        <name>binuclear copper center (CuA)</name>
        <dbReference type="ChEBI" id="CHEBI:47357"/>
    </cofactor>
    <text evidence="1">Binds a binuclear copper A center per subunit.</text>
</comment>
<comment type="subunit">
    <text evidence="4">Associates with subunits I, III and IV to form cytochrome c oxidase. The 4 subunit cytochrome c oxidase forms a supercomplex with the menaquinol-cytochrome c reductase complex (cytochrome bc1).</text>
</comment>
<comment type="subcellular location">
    <subcellularLocation>
        <location>Cell membrane</location>
        <topology>Multi-pass membrane protein</topology>
    </subcellularLocation>
</comment>
<comment type="mass spectrometry"/>
<comment type="similarity">
    <text evidence="5">Belongs to the cytochrome c oxidase subunit 2 family.</text>
</comment>
<sequence>MEQQNKRGLKRKALLGGVLGLGGLAMAGCEVAPPGGVLGDFLRMGWPDGITPEAVAMGNFWSWVWVAAWIIGIIMWGLFLTAIFAWGAKRAEKRGEGEFPKQLQYNVPLELVLTIVPIIIVMVLFFFTVQTQDKVTALDKNPEVTVDVTAYQWNWKFGYSEIDGSLAPGGQDYQGSDPERQAAAEASKKDPSGDNPIHGNSKSDVSYLEFNRIETLGTTDEIPVMVLPVNTPIEFNLASADVAHSFWVPEFLFKRDAYAHPEANKSQRVFQIEEITEEGAFVGRCAEMCGTYHAMMNFELRVVDRDSFAEYISFRDSNPDATNAQALEHIGQAPYATSTSPFVSDRTATRDGENTQSNA</sequence>
<feature type="signal peptide" evidence="4">
    <location>
        <begin position="1"/>
        <end position="28"/>
    </location>
</feature>
<feature type="chain" id="PRO_0000006054" description="Cytochrome c oxidase subunit 2">
    <location>
        <begin position="29"/>
        <end position="359"/>
    </location>
</feature>
<feature type="transmembrane region" description="Helical" evidence="2">
    <location>
        <begin position="64"/>
        <end position="84"/>
    </location>
</feature>
<feature type="transmembrane region" description="Helical" evidence="2">
    <location>
        <begin position="107"/>
        <end position="127"/>
    </location>
</feature>
<feature type="region of interest" description="Disordered" evidence="3">
    <location>
        <begin position="168"/>
        <end position="203"/>
    </location>
</feature>
<feature type="region of interest" description="Disordered" evidence="3">
    <location>
        <begin position="335"/>
        <end position="359"/>
    </location>
</feature>
<feature type="compositionally biased region" description="Basic and acidic residues" evidence="3">
    <location>
        <begin position="177"/>
        <end position="192"/>
    </location>
</feature>
<feature type="binding site" evidence="1">
    <location>
        <position position="244"/>
    </location>
    <ligand>
        <name>Cu cation</name>
        <dbReference type="ChEBI" id="CHEBI:23378"/>
        <label>A1</label>
    </ligand>
</feature>
<feature type="binding site" evidence="1">
    <location>
        <position position="285"/>
    </location>
    <ligand>
        <name>Cu cation</name>
        <dbReference type="ChEBI" id="CHEBI:23378"/>
        <label>A1</label>
    </ligand>
</feature>
<feature type="binding site" evidence="1">
    <location>
        <position position="285"/>
    </location>
    <ligand>
        <name>Cu cation</name>
        <dbReference type="ChEBI" id="CHEBI:23378"/>
        <label>A2</label>
    </ligand>
</feature>
<feature type="binding site" evidence="1">
    <location>
        <position position="287"/>
    </location>
    <ligand>
        <name>Cu cation</name>
        <dbReference type="ChEBI" id="CHEBI:23378"/>
        <label>A2</label>
    </ligand>
</feature>
<feature type="binding site" evidence="1">
    <location>
        <position position="289"/>
    </location>
    <ligand>
        <name>Cu cation</name>
        <dbReference type="ChEBI" id="CHEBI:23378"/>
        <label>A1</label>
    </ligand>
</feature>
<feature type="binding site" evidence="1">
    <location>
        <position position="289"/>
    </location>
    <ligand>
        <name>Cu cation</name>
        <dbReference type="ChEBI" id="CHEBI:23378"/>
        <label>A2</label>
    </ligand>
</feature>
<feature type="binding site" evidence="1">
    <location>
        <position position="293"/>
    </location>
    <ligand>
        <name>Cu cation</name>
        <dbReference type="ChEBI" id="CHEBI:23378"/>
        <label>A2</label>
    </ligand>
</feature>
<feature type="binding site" evidence="1">
    <location>
        <position position="296"/>
    </location>
    <ligand>
        <name>Cu cation</name>
        <dbReference type="ChEBI" id="CHEBI:23378"/>
        <label>A1</label>
    </ligand>
</feature>
<feature type="site" description="Not N-palmitoylated" evidence="4">
    <location>
        <position position="29"/>
    </location>
</feature>
<feature type="lipid moiety-binding region" description="S-diacylglycerol cysteine" evidence="4">
    <location>
        <position position="29"/>
    </location>
</feature>
<feature type="sequence conflict" description="In Ref. 1; BAB64407." evidence="5" ref="1">
    <original>W</original>
    <variation>C</variation>
    <location>
        <position position="69"/>
    </location>
</feature>
<feature type="sequence conflict" description="In Ref. 1; BAB64407." evidence="5" ref="1">
    <original>E</original>
    <variation>V</variation>
    <location>
        <position position="310"/>
    </location>
</feature>
<feature type="helix" evidence="7">
    <location>
        <begin position="36"/>
        <end position="43"/>
    </location>
</feature>
<feature type="helix" evidence="7">
    <location>
        <begin position="52"/>
        <end position="84"/>
    </location>
</feature>
<feature type="helix" evidence="7">
    <location>
        <begin position="88"/>
        <end position="93"/>
    </location>
</feature>
<feature type="helix" evidence="7">
    <location>
        <begin position="107"/>
        <end position="136"/>
    </location>
</feature>
<feature type="strand" evidence="7">
    <location>
        <begin position="143"/>
        <end position="151"/>
    </location>
</feature>
<feature type="strand" evidence="7">
    <location>
        <begin position="154"/>
        <end position="162"/>
    </location>
</feature>
<feature type="turn" evidence="7">
    <location>
        <begin position="164"/>
        <end position="166"/>
    </location>
</feature>
<feature type="helix" evidence="7">
    <location>
        <begin position="168"/>
        <end position="170"/>
    </location>
</feature>
<feature type="helix" evidence="7">
    <location>
        <begin position="178"/>
        <end position="186"/>
    </location>
</feature>
<feature type="strand" evidence="6">
    <location>
        <begin position="191"/>
        <end position="193"/>
    </location>
</feature>
<feature type="turn" evidence="6">
    <location>
        <begin position="196"/>
        <end position="198"/>
    </location>
</feature>
<feature type="strand" evidence="7">
    <location>
        <begin position="211"/>
        <end position="216"/>
    </location>
</feature>
<feature type="strand" evidence="7">
    <location>
        <begin position="219"/>
        <end position="221"/>
    </location>
</feature>
<feature type="strand" evidence="7">
    <location>
        <begin position="224"/>
        <end position="231"/>
    </location>
</feature>
<feature type="strand" evidence="7">
    <location>
        <begin position="233"/>
        <end position="236"/>
    </location>
</feature>
<feature type="strand" evidence="7">
    <location>
        <begin position="239"/>
        <end position="242"/>
    </location>
</feature>
<feature type="strand" evidence="7">
    <location>
        <begin position="244"/>
        <end position="248"/>
    </location>
</feature>
<feature type="helix" evidence="7">
    <location>
        <begin position="249"/>
        <end position="251"/>
    </location>
</feature>
<feature type="strand" evidence="7">
    <location>
        <begin position="253"/>
        <end position="257"/>
    </location>
</feature>
<feature type="turn" evidence="7">
    <location>
        <begin position="261"/>
        <end position="265"/>
    </location>
</feature>
<feature type="strand" evidence="7">
    <location>
        <begin position="269"/>
        <end position="273"/>
    </location>
</feature>
<feature type="strand" evidence="7">
    <location>
        <begin position="279"/>
        <end position="284"/>
    </location>
</feature>
<feature type="helix" evidence="7">
    <location>
        <begin position="293"/>
        <end position="295"/>
    </location>
</feature>
<feature type="strand" evidence="7">
    <location>
        <begin position="297"/>
        <end position="303"/>
    </location>
</feature>
<feature type="helix" evidence="7">
    <location>
        <begin position="305"/>
        <end position="317"/>
    </location>
</feature>
<feature type="helix" evidence="7">
    <location>
        <begin position="323"/>
        <end position="329"/>
    </location>
</feature>
<feature type="helix" evidence="7">
    <location>
        <begin position="348"/>
        <end position="351"/>
    </location>
</feature>
<protein>
    <recommendedName>
        <fullName>Cytochrome c oxidase subunit 2</fullName>
        <ecNumber>7.1.1.9</ecNumber>
    </recommendedName>
    <alternativeName>
        <fullName>Cytochrome aa3 subunit 2</fullName>
    </alternativeName>
    <alternativeName>
        <fullName>Cytochrome c oxidase polypeptide II</fullName>
    </alternativeName>
    <alternativeName>
        <fullName>Oxidase aa(3) subunit 2</fullName>
    </alternativeName>
</protein>
<reference key="1">
    <citation type="journal article" date="2001" name="Microbiology">
        <title>Cytochrome c oxidase contains an extra charged amino acid cluster in a new type of respiratory chain in the amino acid-producing Gram-positive bacterium Corynebacterium glutamicum.</title>
        <authorList>
            <person name="Sakamoto J."/>
            <person name="Shibata T."/>
            <person name="Mine T."/>
            <person name="Miyahara R."/>
            <person name="Torigoe T."/>
            <person name="Noguchi S."/>
            <person name="Matsushita K."/>
            <person name="Sone N."/>
        </authorList>
    </citation>
    <scope>NUCLEOTIDE SEQUENCE [GENOMIC DNA]</scope>
    <scope>PROTEIN SEQUENCE OF 29-50</scope>
    <scope>SUBUNIT</scope>
    <scope>HEME CHARACTERIZATION</scope>
    <scope>DIACYLGLYCEROL AT CYS-29</scope>
    <scope>MASS SPECTROMETRY</scope>
    <source>
        <strain>ATCC 13032 / DSM 20300 / JCM 1318 / BCRC 11384 / CCUG 27702 / LMG 3730 / NBRC 12168 / NCIMB 10025 / NRRL B-2784 / 534</strain>
    </source>
</reference>
<reference key="2">
    <citation type="journal article" date="2003" name="Appl. Microbiol. Biotechnol.">
        <title>The Corynebacterium glutamicum genome: features and impacts on biotechnological processes.</title>
        <authorList>
            <person name="Ikeda M."/>
            <person name="Nakagawa S."/>
        </authorList>
    </citation>
    <scope>NUCLEOTIDE SEQUENCE [LARGE SCALE GENOMIC DNA]</scope>
    <source>
        <strain>ATCC 13032 / DSM 20300 / JCM 1318 / BCRC 11384 / CCUG 27702 / LMG 3730 / NBRC 12168 / NCIMB 10025 / NRRL B-2784 / 534</strain>
    </source>
</reference>
<reference key="3">
    <citation type="journal article" date="2003" name="J. Biotechnol.">
        <title>The complete Corynebacterium glutamicum ATCC 13032 genome sequence and its impact on the production of L-aspartate-derived amino acids and vitamins.</title>
        <authorList>
            <person name="Kalinowski J."/>
            <person name="Bathe B."/>
            <person name="Bartels D."/>
            <person name="Bischoff N."/>
            <person name="Bott M."/>
            <person name="Burkovski A."/>
            <person name="Dusch N."/>
            <person name="Eggeling L."/>
            <person name="Eikmanns B.J."/>
            <person name="Gaigalat L."/>
            <person name="Goesmann A."/>
            <person name="Hartmann M."/>
            <person name="Huthmacher K."/>
            <person name="Kraemer R."/>
            <person name="Linke B."/>
            <person name="McHardy A.C."/>
            <person name="Meyer F."/>
            <person name="Moeckel B."/>
            <person name="Pfefferle W."/>
            <person name="Puehler A."/>
            <person name="Rey D.A."/>
            <person name="Rueckert C."/>
            <person name="Rupp O."/>
            <person name="Sahm H."/>
            <person name="Wendisch V.F."/>
            <person name="Wiegraebe I."/>
            <person name="Tauch A."/>
        </authorList>
    </citation>
    <scope>NUCLEOTIDE SEQUENCE [LARGE SCALE GENOMIC DNA]</scope>
    <source>
        <strain>ATCC 13032 / DSM 20300 / JCM 1318 / BCRC 11384 / CCUG 27702 / LMG 3730 / NBRC 12168 / NCIMB 10025 / NRRL B-2784 / 534</strain>
    </source>
</reference>
<reference key="4">
    <citation type="journal article" date="2003" name="J. Biol. Chem.">
        <title>Purification of a cytochrome bc1-aa3 supercomplex with quinol oxidase activity from Corynebacterium glutamicum. Identification of a fourth subunity of cytochrome aa3 oxidase and mutational analysis of diheme cytochrome c1.</title>
        <authorList>
            <person name="Niebisch A."/>
            <person name="Bott M."/>
        </authorList>
    </citation>
    <scope>DETECTION IN A SUPERCOMPLEX WITH MENAQUINOL-CYTOCHROME C REDUCTASE (CYTOCHROME BC1)</scope>
    <source>
        <strain>ATCC 13032 / DSM 20300 / JCM 1318 / BCRC 11384 / CCUG 27702 / LMG 3730 / NBRC 12168 / NCIMB 10025 / NRRL B-2784 / 534</strain>
    </source>
</reference>
<proteinExistence type="evidence at protein level"/>
<keyword id="KW-0002">3D-structure</keyword>
<keyword id="KW-1003">Cell membrane</keyword>
<keyword id="KW-0186">Copper</keyword>
<keyword id="KW-0903">Direct protein sequencing</keyword>
<keyword id="KW-0249">Electron transport</keyword>
<keyword id="KW-0449">Lipoprotein</keyword>
<keyword id="KW-0472">Membrane</keyword>
<keyword id="KW-0479">Metal-binding</keyword>
<keyword id="KW-1185">Reference proteome</keyword>
<keyword id="KW-0679">Respiratory chain</keyword>
<keyword id="KW-0732">Signal</keyword>
<keyword id="KW-1278">Translocase</keyword>
<keyword id="KW-0812">Transmembrane</keyword>
<keyword id="KW-1133">Transmembrane helix</keyword>
<keyword id="KW-0813">Transport</keyword>
<accession>Q8NNK2</accession>
<accession>Q6M3N8</accession>
<accession>Q93HZ4</accession>
<organism>
    <name type="scientific">Corynebacterium glutamicum (strain ATCC 13032 / DSM 20300 / JCM 1318 / BCRC 11384 / CCUG 27702 / LMG 3730 / NBRC 12168 / NCIMB 10025 / NRRL B-2784 / 534)</name>
    <dbReference type="NCBI Taxonomy" id="196627"/>
    <lineage>
        <taxon>Bacteria</taxon>
        <taxon>Bacillati</taxon>
        <taxon>Actinomycetota</taxon>
        <taxon>Actinomycetes</taxon>
        <taxon>Mycobacteriales</taxon>
        <taxon>Corynebacteriaceae</taxon>
        <taxon>Corynebacterium</taxon>
    </lineage>
</organism>
<evidence type="ECO:0000250" key="1"/>
<evidence type="ECO:0000255" key="2"/>
<evidence type="ECO:0000256" key="3">
    <source>
        <dbReference type="SAM" id="MobiDB-lite"/>
    </source>
</evidence>
<evidence type="ECO:0000269" key="4">
    <source>
    </source>
</evidence>
<evidence type="ECO:0000305" key="5"/>
<evidence type="ECO:0007829" key="6">
    <source>
        <dbReference type="PDB" id="7Q21"/>
    </source>
</evidence>
<evidence type="ECO:0007829" key="7">
    <source>
        <dbReference type="PDB" id="7QHM"/>
    </source>
</evidence>